<gene>
    <name type="primary">HMGB2</name>
    <name type="synonym">HMG2</name>
</gene>
<name>HMGB2_HUMAN</name>
<sequence length="209" mass="24034">MGKGDPNKPRGKMSSYAFFVQTCREEHKKKHPDSSVNFAEFSKKCSERWKTMSAKEKSKFEDMAKSDKARYDREMKNYVPPKGDKKGKKKDPNAPKRPPSAFFLFCSEHRPKIKSEHPGLSIGDTAKKLGEMWSEQSAKDKQPYEQKAAKLKEKYEKDIAAYRAKGKSEAGKKGPGRPTGSKKKNEPEDEEEEEEEEDEDEEEEDEDEE</sequence>
<keyword id="KW-0007">Acetylation</keyword>
<keyword id="KW-0145">Chemotaxis</keyword>
<keyword id="KW-0158">Chromosome</keyword>
<keyword id="KW-0963">Cytoplasm</keyword>
<keyword id="KW-1015">Disulfide bond</keyword>
<keyword id="KW-0233">DNA recombination</keyword>
<keyword id="KW-0238">DNA-binding</keyword>
<keyword id="KW-0391">Immunity</keyword>
<keyword id="KW-0395">Inflammatory response</keyword>
<keyword id="KW-0399">Innate immunity</keyword>
<keyword id="KW-0539">Nucleus</keyword>
<keyword id="KW-0558">Oxidation</keyword>
<keyword id="KW-0597">Phosphoprotein</keyword>
<keyword id="KW-1267">Proteomics identification</keyword>
<keyword id="KW-1185">Reference proteome</keyword>
<keyword id="KW-0677">Repeat</keyword>
<keyword id="KW-0964">Secreted</keyword>
<keyword id="KW-0804">Transcription</keyword>
<keyword id="KW-0805">Transcription regulation</keyword>
<organism>
    <name type="scientific">Homo sapiens</name>
    <name type="common">Human</name>
    <dbReference type="NCBI Taxonomy" id="9606"/>
    <lineage>
        <taxon>Eukaryota</taxon>
        <taxon>Metazoa</taxon>
        <taxon>Chordata</taxon>
        <taxon>Craniata</taxon>
        <taxon>Vertebrata</taxon>
        <taxon>Euteleostomi</taxon>
        <taxon>Mammalia</taxon>
        <taxon>Eutheria</taxon>
        <taxon>Euarchontoglires</taxon>
        <taxon>Primates</taxon>
        <taxon>Haplorrhini</taxon>
        <taxon>Catarrhini</taxon>
        <taxon>Hominidae</taxon>
        <taxon>Homo</taxon>
    </lineage>
</organism>
<feature type="chain" id="PRO_0000048534" description="High mobility group protein B2">
    <location>
        <begin position="1"/>
        <end position="209"/>
    </location>
</feature>
<feature type="DNA-binding region" description="HMG box 1" evidence="5">
    <location>
        <begin position="9"/>
        <end position="79"/>
    </location>
</feature>
<feature type="DNA-binding region" description="HMG box 2" evidence="5">
    <location>
        <begin position="95"/>
        <end position="163"/>
    </location>
</feature>
<feature type="region of interest" description="Disordered" evidence="6">
    <location>
        <begin position="52"/>
        <end position="150"/>
    </location>
</feature>
<feature type="region of interest" description="Disordered" evidence="6">
    <location>
        <begin position="162"/>
        <end position="209"/>
    </location>
</feature>
<feature type="region of interest" description="Required for chemotactic activity" evidence="11">
    <location>
        <begin position="165"/>
        <end position="180"/>
    </location>
</feature>
<feature type="compositionally biased region" description="Basic and acidic residues" evidence="6">
    <location>
        <begin position="52"/>
        <end position="76"/>
    </location>
</feature>
<feature type="compositionally biased region" description="Basic and acidic residues" evidence="6">
    <location>
        <begin position="107"/>
        <end position="117"/>
    </location>
</feature>
<feature type="compositionally biased region" description="Basic and acidic residues" evidence="6">
    <location>
        <begin position="137"/>
        <end position="150"/>
    </location>
</feature>
<feature type="compositionally biased region" description="Basic and acidic residues" evidence="6">
    <location>
        <begin position="162"/>
        <end position="172"/>
    </location>
</feature>
<feature type="compositionally biased region" description="Acidic residues" evidence="6">
    <location>
        <begin position="187"/>
        <end position="209"/>
    </location>
</feature>
<feature type="modified residue" description="N6-acetyllysine" evidence="4">
    <location>
        <position position="3"/>
    </location>
</feature>
<feature type="modified residue" description="Cysteine sulfonic acid (-SO3H); alternate" evidence="4">
    <location>
        <position position="23"/>
    </location>
</feature>
<feature type="modified residue" description="N6-acetyllysine" evidence="18">
    <location>
        <position position="30"/>
    </location>
</feature>
<feature type="modified residue" description="Phosphoserine" evidence="19">
    <location>
        <position position="35"/>
    </location>
</feature>
<feature type="modified residue" description="N6-acetyllysine" evidence="3">
    <location>
        <position position="43"/>
    </location>
</feature>
<feature type="modified residue" description="Cysteine sulfonic acid (-SO3H); alternate" evidence="4">
    <location>
        <position position="45"/>
    </location>
</feature>
<feature type="modified residue" description="N6-acetyllysine" evidence="3">
    <location>
        <position position="90"/>
    </location>
</feature>
<feature type="modified residue" description="Phosphoserine" evidence="1">
    <location>
        <position position="100"/>
    </location>
</feature>
<feature type="modified residue" description="Cysteine sulfonic acid (-SO3H)" evidence="4">
    <location>
        <position position="106"/>
    </location>
</feature>
<feature type="modified residue" description="N6-acetyllysine" evidence="2">
    <location>
        <position position="114"/>
    </location>
</feature>
<feature type="modified residue" description="N6-acetyllysine" evidence="3">
    <location>
        <position position="141"/>
    </location>
</feature>
<feature type="disulfide bond" description="In disulfide HMGB2; alternate" evidence="4">
    <location>
        <begin position="23"/>
        <end position="45"/>
    </location>
</feature>
<feature type="sequence conflict" description="In Ref. 7; CAA78938." evidence="15" ref="7">
    <original>R</original>
    <variation>G</variation>
    <location>
        <position position="163"/>
    </location>
</feature>
<evidence type="ECO:0000250" key="1">
    <source>
        <dbReference type="UniProtKB" id="P09429"/>
    </source>
</evidence>
<evidence type="ECO:0000250" key="2">
    <source>
        <dbReference type="UniProtKB" id="P30681"/>
    </source>
</evidence>
<evidence type="ECO:0000250" key="3">
    <source>
        <dbReference type="UniProtKB" id="P63158"/>
    </source>
</evidence>
<evidence type="ECO:0000250" key="4">
    <source>
        <dbReference type="UniProtKB" id="P63159"/>
    </source>
</evidence>
<evidence type="ECO:0000255" key="5">
    <source>
        <dbReference type="PROSITE-ProRule" id="PRU00267"/>
    </source>
</evidence>
<evidence type="ECO:0000256" key="6">
    <source>
        <dbReference type="SAM" id="MobiDB-lite"/>
    </source>
</evidence>
<evidence type="ECO:0000269" key="7">
    <source>
    </source>
</evidence>
<evidence type="ECO:0000269" key="8">
    <source>
    </source>
</evidence>
<evidence type="ECO:0000269" key="9">
    <source>
    </source>
</evidence>
<evidence type="ECO:0000269" key="10">
    <source>
    </source>
</evidence>
<evidence type="ECO:0000269" key="11">
    <source>
    </source>
</evidence>
<evidence type="ECO:0000269" key="12">
    <source>
    </source>
</evidence>
<evidence type="ECO:0000269" key="13">
    <source>
    </source>
</evidence>
<evidence type="ECO:0000269" key="14">
    <source>
    </source>
</evidence>
<evidence type="ECO:0000305" key="15"/>
<evidence type="ECO:0000305" key="16">
    <source>
    </source>
</evidence>
<evidence type="ECO:0000305" key="17">
    <source>
    </source>
</evidence>
<evidence type="ECO:0007744" key="18">
    <source>
    </source>
</evidence>
<evidence type="ECO:0007744" key="19">
    <source>
    </source>
</evidence>
<comment type="function">
    <text evidence="1 2 7 9 10 11 12 13 14 16">Multifunctional protein with various roles in different cellular compartments. May act in a redox sensitive manner. In the nucleus is an abundant chromatin-associated non-histone protein involved in transcription, chromatin remodeling and V(D)J recombination and probably other processes. Binds DNA with a preference to non-canonical DNA structures such as single-stranded DNA. Can bent DNA and enhance DNA flexibility by looping thus providing a mechanism to promote activities on various gene promoters by enhancing transcription factor binding and/or bringing distant regulatory sequences into close proximity (PubMed:11909973, PubMed:18413230, PubMed:19522541, PubMed:19965638, PubMed:20123072, PubMed:7797075). Involved in V(D)J recombination by acting as a cofactor of the RAG complex: acts by stimulating cleavage and RAG protein binding at the 23 bp spacer of conserved recombination signal sequences (RSS) (By similarity). Proposed to be involved in the innate immune response to nucleic acids by acting as a promiscuous immunogenic DNA/RNA sensor which cooperates with subsequent discriminative sensing by specific pattern recognition receptors (By similarity). In the extracellular compartment acts as a chemokine. Promotes proliferation and migration of endothelial cells implicating AGER/RAGE (PubMed:19811285). Has antimicrobial activity in gastrointestinal epithelial tissues (PubMed:23877675). Involved in inflammatory response to antigenic stimulus coupled with pro-inflammatory activity (By similarity). Involved in modulation of neurogenesis probably by regulation of neural stem proliferation (By similarity). Involved in articular cartilage surface maintenance implicating LEF1 and the Wnt/beta-catenin pathway (By similarity).</text>
</comment>
<comment type="subunit">
    <text evidence="2 7">Interacts with POU2F2, POU2F1 and POU3F1 (By similarity). Component of the RAG complex composed of core components RAG1 and RAG2, and associated component HMGB1 or HMGB2 (By similarity). Component of the SET complex, composed of at least ANP32A, APEX1, HMGB2, NME1, SET and TREX1. Directly interacts with SET (PubMed:11909973). Interacts with LEF1 (By similarity).</text>
</comment>
<comment type="interaction">
    <interactant intactId="EBI-1057009">
        <id>P26583</id>
    </interactant>
    <interactant intactId="EBI-1550112">
        <id>Q8N668</id>
        <label>COMMD1</label>
    </interactant>
    <organismsDiffer>false</organismsDiffer>
    <experiments>3</experiments>
</comment>
<comment type="interaction">
    <interactant intactId="EBI-1057009">
        <id>P26583</id>
    </interactant>
    <interactant intactId="EBI-6137472">
        <id>Q9BRT3</id>
        <label>MIEN1</label>
    </interactant>
    <organismsDiffer>false</organismsDiffer>
    <experiments>6</experiments>
</comment>
<comment type="interaction">
    <interactant intactId="EBI-1057009">
        <id>P26583</id>
    </interactant>
    <interactant intactId="EBI-720156">
        <id>Q9NZM5</id>
        <label>NOP53</label>
    </interactant>
    <organismsDiffer>false</organismsDiffer>
    <experiments>4</experiments>
</comment>
<comment type="interaction">
    <interactant intactId="EBI-1057009">
        <id>P26583</id>
    </interactant>
    <interactant intactId="EBI-1373569">
        <id>P55347</id>
        <label>PKNOX1</label>
    </interactant>
    <organismsDiffer>false</organismsDiffer>
    <experiments>4</experiments>
</comment>
<comment type="interaction">
    <interactant intactId="EBI-1057009">
        <id>P26583</id>
    </interactant>
    <interactant intactId="EBI-10173774">
        <id>Q96I87</id>
        <label>PKNOX1</label>
    </interactant>
    <organismsDiffer>false</organismsDiffer>
    <experiments>3</experiments>
</comment>
<comment type="interaction">
    <interactant intactId="EBI-1057009">
        <id>P26583</id>
    </interactant>
    <interactant intactId="EBI-21353855">
        <id>Q99598</id>
        <label>TSNAX</label>
    </interactant>
    <organismsDiffer>false</organismsDiffer>
    <experiments>3</experiments>
</comment>
<comment type="interaction">
    <interactant intactId="EBI-1057009">
        <id>P26583</id>
    </interactant>
    <interactant intactId="EBI-9995882">
        <id>Q96B54</id>
        <label>ZNF428</label>
    </interactant>
    <organismsDiffer>false</organismsDiffer>
    <experiments>4</experiments>
</comment>
<comment type="subcellular location">
    <subcellularLocation>
        <location evidence="7 8 13">Nucleus</location>
    </subcellularLocation>
    <subcellularLocation>
        <location evidence="8">Chromosome</location>
    </subcellularLocation>
    <subcellularLocation>
        <location evidence="7 13">Cytoplasm</location>
    </subcellularLocation>
    <subcellularLocation>
        <location evidence="11 13">Secreted</location>
    </subcellularLocation>
    <text evidence="15">In basal state predominantly nuclear.</text>
</comment>
<comment type="tissue specificity">
    <text evidence="13">Expressed in gastric and intestinal tissues (at protein level).</text>
</comment>
<comment type="domain">
    <text evidence="13">Both, HMG box 1 and HMG box 2, show antimicrobial activity.</text>
</comment>
<comment type="PTM">
    <text evidence="1 17">Reduction/oxidation of cysteine residues Cys-23, Cys-45 and Cys-106 and a possible intramolecular disulfide bond involving Cys-23 and Cys-45 give rise to different redox forms with specific functional activities in various cellular compartments: 1- fully reduced HMGB2 (HMGB2C23hC45hC106h), 2- disulfide HMGB2 (HMGB2C23-C45C106h) and 3- sulfonyl HMGB2 (HMGB2C23soC45soC106so).</text>
</comment>
<comment type="PTM">
    <text evidence="10">Acetylation enhances nucleosome binding and chromation remodeling activity.</text>
</comment>
<comment type="similarity">
    <text evidence="15">Belongs to the HMGB family.</text>
</comment>
<dbReference type="EMBL" id="M83665">
    <property type="protein sequence ID" value="AAA58659.1"/>
    <property type="molecule type" value="Genomic_DNA"/>
</dbReference>
<dbReference type="EMBL" id="X62534">
    <property type="protein sequence ID" value="CAA44395.1"/>
    <property type="molecule type" value="mRNA"/>
</dbReference>
<dbReference type="EMBL" id="BT019782">
    <property type="protein sequence ID" value="AAV38585.1"/>
    <property type="molecule type" value="mRNA"/>
</dbReference>
<dbReference type="EMBL" id="AK311864">
    <property type="protein sequence ID" value="BAG34805.1"/>
    <property type="molecule type" value="mRNA"/>
</dbReference>
<dbReference type="EMBL" id="CH471056">
    <property type="protein sequence ID" value="EAX04758.1"/>
    <property type="molecule type" value="Genomic_DNA"/>
</dbReference>
<dbReference type="EMBL" id="CH471056">
    <property type="protein sequence ID" value="EAX04759.1"/>
    <property type="molecule type" value="Genomic_DNA"/>
</dbReference>
<dbReference type="EMBL" id="BC001063">
    <property type="protein sequence ID" value="AAH01063.1"/>
    <property type="molecule type" value="mRNA"/>
</dbReference>
<dbReference type="EMBL" id="BC100019">
    <property type="protein sequence ID" value="AAI00020.1"/>
    <property type="molecule type" value="mRNA"/>
</dbReference>
<dbReference type="EMBL" id="Z17240">
    <property type="protein sequence ID" value="CAA78938.1"/>
    <property type="molecule type" value="mRNA"/>
</dbReference>
<dbReference type="CCDS" id="CCDS3816.1"/>
<dbReference type="PIR" id="A42425">
    <property type="entry name" value="NSHUH2"/>
</dbReference>
<dbReference type="PIR" id="S30221">
    <property type="entry name" value="S30221"/>
</dbReference>
<dbReference type="RefSeq" id="NP_001124160.1">
    <property type="nucleotide sequence ID" value="NM_001130688.1"/>
</dbReference>
<dbReference type="RefSeq" id="NP_001124161.1">
    <property type="nucleotide sequence ID" value="NM_001130689.1"/>
</dbReference>
<dbReference type="RefSeq" id="NP_002120.1">
    <property type="nucleotide sequence ID" value="NM_002129.4"/>
</dbReference>
<dbReference type="SMR" id="P26583"/>
<dbReference type="BioGRID" id="109391">
    <property type="interactions" value="264"/>
</dbReference>
<dbReference type="CORUM" id="P26583"/>
<dbReference type="FunCoup" id="P26583">
    <property type="interactions" value="2569"/>
</dbReference>
<dbReference type="IntAct" id="P26583">
    <property type="interactions" value="158"/>
</dbReference>
<dbReference type="MINT" id="P26583"/>
<dbReference type="STRING" id="9606.ENSP00000296503"/>
<dbReference type="ChEMBL" id="CHEMBL4295734"/>
<dbReference type="GlyGen" id="P26583">
    <property type="glycosylation" value="1 site, 1 O-linked glycan (1 site)"/>
</dbReference>
<dbReference type="iPTMnet" id="P26583"/>
<dbReference type="MetOSite" id="P26583"/>
<dbReference type="PhosphoSitePlus" id="P26583"/>
<dbReference type="SwissPalm" id="P26583"/>
<dbReference type="BioMuta" id="HMGB2"/>
<dbReference type="DMDM" id="123374"/>
<dbReference type="jPOST" id="P26583"/>
<dbReference type="MassIVE" id="P26583"/>
<dbReference type="PaxDb" id="9606-ENSP00000296503"/>
<dbReference type="PeptideAtlas" id="P26583"/>
<dbReference type="ProteomicsDB" id="54353"/>
<dbReference type="Pumba" id="P26583"/>
<dbReference type="TopDownProteomics" id="P26583"/>
<dbReference type="ABCD" id="P26583">
    <property type="antibodies" value="1 sequenced antibody"/>
</dbReference>
<dbReference type="Antibodypedia" id="1112">
    <property type="antibodies" value="403 antibodies from 35 providers"/>
</dbReference>
<dbReference type="DNASU" id="3148"/>
<dbReference type="Ensembl" id="ENST00000296503.10">
    <property type="protein sequence ID" value="ENSP00000296503.5"/>
    <property type="gene ID" value="ENSG00000164104.12"/>
</dbReference>
<dbReference type="Ensembl" id="ENST00000438704.6">
    <property type="protein sequence ID" value="ENSP00000404912.2"/>
    <property type="gene ID" value="ENSG00000164104.12"/>
</dbReference>
<dbReference type="Ensembl" id="ENST00000446922.6">
    <property type="protein sequence ID" value="ENSP00000393448.2"/>
    <property type="gene ID" value="ENSG00000164104.12"/>
</dbReference>
<dbReference type="GeneID" id="3148"/>
<dbReference type="KEGG" id="hsa:3148"/>
<dbReference type="MANE-Select" id="ENST00000296503.10">
    <property type="protein sequence ID" value="ENSP00000296503.5"/>
    <property type="RefSeq nucleotide sequence ID" value="NM_002129.4"/>
    <property type="RefSeq protein sequence ID" value="NP_002120.1"/>
</dbReference>
<dbReference type="UCSC" id="uc003ita.4">
    <property type="organism name" value="human"/>
</dbReference>
<dbReference type="AGR" id="HGNC:5000"/>
<dbReference type="CTD" id="3148"/>
<dbReference type="DisGeNET" id="3148"/>
<dbReference type="GeneCards" id="HMGB2"/>
<dbReference type="HGNC" id="HGNC:5000">
    <property type="gene designation" value="HMGB2"/>
</dbReference>
<dbReference type="HPA" id="ENSG00000164104">
    <property type="expression patterns" value="Group enriched (bone marrow, lymphoid tissue)"/>
</dbReference>
<dbReference type="MIM" id="163906">
    <property type="type" value="gene"/>
</dbReference>
<dbReference type="neXtProt" id="NX_P26583"/>
<dbReference type="OpenTargets" id="ENSG00000164104"/>
<dbReference type="PharmGKB" id="PA35091"/>
<dbReference type="VEuPathDB" id="HostDB:ENSG00000164104"/>
<dbReference type="eggNOG" id="KOG0381">
    <property type="taxonomic scope" value="Eukaryota"/>
</dbReference>
<dbReference type="GeneTree" id="ENSGT00940000154466"/>
<dbReference type="HOGENOM" id="CLU_082854_0_0_1"/>
<dbReference type="InParanoid" id="P26583"/>
<dbReference type="OMA" id="SHAFFGQ"/>
<dbReference type="OrthoDB" id="1919336at2759"/>
<dbReference type="PAN-GO" id="P26583">
    <property type="GO annotations" value="2 GO annotations based on evolutionary models"/>
</dbReference>
<dbReference type="PhylomeDB" id="P26583"/>
<dbReference type="TreeFam" id="TF105371"/>
<dbReference type="PathwayCommons" id="P26583"/>
<dbReference type="Reactome" id="R-HSA-140342">
    <property type="pathway name" value="Apoptosis induced DNA fragmentation"/>
</dbReference>
<dbReference type="SignaLink" id="P26583"/>
<dbReference type="SIGNOR" id="P26583"/>
<dbReference type="BioGRID-ORCS" id="3148">
    <property type="hits" value="20 hits in 1189 CRISPR screens"/>
</dbReference>
<dbReference type="CD-CODE" id="91857CE7">
    <property type="entry name" value="Nucleolus"/>
</dbReference>
<dbReference type="ChiTaRS" id="HMGB2">
    <property type="organism name" value="human"/>
</dbReference>
<dbReference type="GeneWiki" id="HMGB2"/>
<dbReference type="GenomeRNAi" id="3148"/>
<dbReference type="Pharos" id="P26583">
    <property type="development level" value="Tbio"/>
</dbReference>
<dbReference type="PRO" id="PR:P26583"/>
<dbReference type="Proteomes" id="UP000005640">
    <property type="component" value="Chromosome 4"/>
</dbReference>
<dbReference type="RNAct" id="P26583">
    <property type="molecule type" value="protein"/>
</dbReference>
<dbReference type="Bgee" id="ENSG00000164104">
    <property type="expression patterns" value="Expressed in ventricular zone and 211 other cell types or tissues"/>
</dbReference>
<dbReference type="ExpressionAtlas" id="P26583">
    <property type="expression patterns" value="baseline and differential"/>
</dbReference>
<dbReference type="GO" id="GO:0000785">
    <property type="term" value="C:chromatin"/>
    <property type="evidence" value="ECO:0000250"/>
    <property type="project" value="AgBase"/>
</dbReference>
<dbReference type="GO" id="GO:0000793">
    <property type="term" value="C:condensed chromosome"/>
    <property type="evidence" value="ECO:0000314"/>
    <property type="project" value="UniProtKB"/>
</dbReference>
<dbReference type="GO" id="GO:0005737">
    <property type="term" value="C:cytoplasm"/>
    <property type="evidence" value="ECO:0000314"/>
    <property type="project" value="UniProtKB"/>
</dbReference>
<dbReference type="GO" id="GO:0005615">
    <property type="term" value="C:extracellular space"/>
    <property type="evidence" value="ECO:0000314"/>
    <property type="project" value="UniProtKB"/>
</dbReference>
<dbReference type="GO" id="GO:0005730">
    <property type="term" value="C:nucleolus"/>
    <property type="evidence" value="ECO:0000314"/>
    <property type="project" value="HPA"/>
</dbReference>
<dbReference type="GO" id="GO:0005654">
    <property type="term" value="C:nucleoplasm"/>
    <property type="evidence" value="ECO:0000314"/>
    <property type="project" value="HPA"/>
</dbReference>
<dbReference type="GO" id="GO:0005634">
    <property type="term" value="C:nucleus"/>
    <property type="evidence" value="ECO:0000314"/>
    <property type="project" value="UniProtKB"/>
</dbReference>
<dbReference type="GO" id="GO:0048471">
    <property type="term" value="C:perinuclear region of cytoplasm"/>
    <property type="evidence" value="ECO:0000314"/>
    <property type="project" value="UniProtKB"/>
</dbReference>
<dbReference type="GO" id="GO:0032991">
    <property type="term" value="C:protein-containing complex"/>
    <property type="evidence" value="ECO:0000314"/>
    <property type="project" value="UniProtKB"/>
</dbReference>
<dbReference type="GO" id="GO:0042056">
    <property type="term" value="F:chemoattractant activity"/>
    <property type="evidence" value="ECO:0000314"/>
    <property type="project" value="UniProtKB"/>
</dbReference>
<dbReference type="GO" id="GO:0000987">
    <property type="term" value="F:cis-regulatory region sequence-specific DNA binding"/>
    <property type="evidence" value="ECO:0000250"/>
    <property type="project" value="AgBase"/>
</dbReference>
<dbReference type="GO" id="GO:0003684">
    <property type="term" value="F:damaged DNA binding"/>
    <property type="evidence" value="ECO:0000314"/>
    <property type="project" value="UniProtKB"/>
</dbReference>
<dbReference type="GO" id="GO:0003677">
    <property type="term" value="F:DNA binding"/>
    <property type="evidence" value="ECO:0000315"/>
    <property type="project" value="UniProtKB"/>
</dbReference>
<dbReference type="GO" id="GO:0008301">
    <property type="term" value="F:DNA binding, bending"/>
    <property type="evidence" value="ECO:0000314"/>
    <property type="project" value="UniProtKB"/>
</dbReference>
<dbReference type="GO" id="GO:0140297">
    <property type="term" value="F:DNA-binding transcription factor binding"/>
    <property type="evidence" value="ECO:0007669"/>
    <property type="project" value="Ensembl"/>
</dbReference>
<dbReference type="GO" id="GO:0003690">
    <property type="term" value="F:double-stranded DNA binding"/>
    <property type="evidence" value="ECO:0000250"/>
    <property type="project" value="UniProtKB"/>
</dbReference>
<dbReference type="GO" id="GO:0000400">
    <property type="term" value="F:four-way junction DNA binding"/>
    <property type="evidence" value="ECO:0000250"/>
    <property type="project" value="AgBase"/>
</dbReference>
<dbReference type="GO" id="GO:0044378">
    <property type="term" value="F:non-sequence-specific DNA binding, bending"/>
    <property type="evidence" value="ECO:0000250"/>
    <property type="project" value="AgBase"/>
</dbReference>
<dbReference type="GO" id="GO:0019904">
    <property type="term" value="F:protein domain specific binding"/>
    <property type="evidence" value="ECO:0007669"/>
    <property type="project" value="Ensembl"/>
</dbReference>
<dbReference type="GO" id="GO:0050786">
    <property type="term" value="F:RAGE receptor binding"/>
    <property type="evidence" value="ECO:0000316"/>
    <property type="project" value="UniProtKB"/>
</dbReference>
<dbReference type="GO" id="GO:0003723">
    <property type="term" value="F:RNA binding"/>
    <property type="evidence" value="ECO:0007005"/>
    <property type="project" value="UniProtKB"/>
</dbReference>
<dbReference type="GO" id="GO:0003697">
    <property type="term" value="F:single-stranded DNA binding"/>
    <property type="evidence" value="ECO:0000250"/>
    <property type="project" value="UniProtKB"/>
</dbReference>
<dbReference type="GO" id="GO:0097100">
    <property type="term" value="F:supercoiled DNA binding"/>
    <property type="evidence" value="ECO:0000250"/>
    <property type="project" value="AgBase"/>
</dbReference>
<dbReference type="GO" id="GO:0000976">
    <property type="term" value="F:transcription cis-regulatory region binding"/>
    <property type="evidence" value="ECO:0000314"/>
    <property type="project" value="UniProtKB"/>
</dbReference>
<dbReference type="GO" id="GO:0003713">
    <property type="term" value="F:transcription coactivator activity"/>
    <property type="evidence" value="ECO:0000314"/>
    <property type="project" value="UniProtKB"/>
</dbReference>
<dbReference type="GO" id="GO:0008134">
    <property type="term" value="F:transcription factor binding"/>
    <property type="evidence" value="ECO:0000250"/>
    <property type="project" value="AgBase"/>
</dbReference>
<dbReference type="GO" id="GO:0060326">
    <property type="term" value="P:cell chemotaxis"/>
    <property type="evidence" value="ECO:0000314"/>
    <property type="project" value="UniProtKB"/>
</dbReference>
<dbReference type="GO" id="GO:0071222">
    <property type="term" value="P:cellular response to lipopolysaccharide"/>
    <property type="evidence" value="ECO:0000270"/>
    <property type="project" value="UniProtKB"/>
</dbReference>
<dbReference type="GO" id="GO:0006325">
    <property type="term" value="P:chromatin organization"/>
    <property type="evidence" value="ECO:0000303"/>
    <property type="project" value="UniProtKB"/>
</dbReference>
<dbReference type="GO" id="GO:0050829">
    <property type="term" value="P:defense response to Gram-negative bacterium"/>
    <property type="evidence" value="ECO:0000314"/>
    <property type="project" value="AgBase"/>
</dbReference>
<dbReference type="GO" id="GO:0050830">
    <property type="term" value="P:defense response to Gram-positive bacterium"/>
    <property type="evidence" value="ECO:0000314"/>
    <property type="project" value="AgBase"/>
</dbReference>
<dbReference type="GO" id="GO:0032392">
    <property type="term" value="P:DNA geometric change"/>
    <property type="evidence" value="ECO:0000250"/>
    <property type="project" value="AgBase"/>
</dbReference>
<dbReference type="GO" id="GO:0006265">
    <property type="term" value="P:DNA topological change"/>
    <property type="evidence" value="ECO:0000250"/>
    <property type="project" value="UniProtKB"/>
</dbReference>
<dbReference type="GO" id="GO:0006303">
    <property type="term" value="P:double-strand break repair via nonhomologous end joining"/>
    <property type="evidence" value="ECO:0000250"/>
    <property type="project" value="UniProtKB"/>
</dbReference>
<dbReference type="GO" id="GO:0008625">
    <property type="term" value="P:extrinsic apoptotic signaling pathway via death domain receptors"/>
    <property type="evidence" value="ECO:0007669"/>
    <property type="project" value="Ensembl"/>
</dbReference>
<dbReference type="GO" id="GO:0002437">
    <property type="term" value="P:inflammatory response to antigenic stimulus"/>
    <property type="evidence" value="ECO:0000250"/>
    <property type="project" value="AgBase"/>
</dbReference>
<dbReference type="GO" id="GO:0045087">
    <property type="term" value="P:innate immune response"/>
    <property type="evidence" value="ECO:0007669"/>
    <property type="project" value="UniProtKB-KW"/>
</dbReference>
<dbReference type="GO" id="GO:0008584">
    <property type="term" value="P:male gonad development"/>
    <property type="evidence" value="ECO:0007669"/>
    <property type="project" value="Ensembl"/>
</dbReference>
<dbReference type="GO" id="GO:0045892">
    <property type="term" value="P:negative regulation of DNA-templated transcription"/>
    <property type="evidence" value="ECO:0000314"/>
    <property type="project" value="BHF-UCL"/>
</dbReference>
<dbReference type="GO" id="GO:1902042">
    <property type="term" value="P:negative regulation of extrinsic apoptotic signaling pathway via death domain receptors"/>
    <property type="evidence" value="ECO:0007669"/>
    <property type="project" value="Ensembl"/>
</dbReference>
<dbReference type="GO" id="GO:0010629">
    <property type="term" value="P:negative regulation of gene expression"/>
    <property type="evidence" value="ECO:0007669"/>
    <property type="project" value="Ensembl"/>
</dbReference>
<dbReference type="GO" id="GO:0000122">
    <property type="term" value="P:negative regulation of transcription by RNA polymerase II"/>
    <property type="evidence" value="ECO:0000314"/>
    <property type="project" value="UniProtKB"/>
</dbReference>
<dbReference type="GO" id="GO:0006334">
    <property type="term" value="P:nucleosome assembly"/>
    <property type="evidence" value="ECO:0000303"/>
    <property type="project" value="UniProtKB"/>
</dbReference>
<dbReference type="GO" id="GO:0045893">
    <property type="term" value="P:positive regulation of DNA-templated transcription"/>
    <property type="evidence" value="ECO:0000314"/>
    <property type="project" value="UniProtKB"/>
</dbReference>
<dbReference type="GO" id="GO:0001938">
    <property type="term" value="P:positive regulation of endothelial cell proliferation"/>
    <property type="evidence" value="ECO:0000314"/>
    <property type="project" value="UniProtKB"/>
</dbReference>
<dbReference type="GO" id="GO:0045648">
    <property type="term" value="P:positive regulation of erythrocyte differentiation"/>
    <property type="evidence" value="ECO:0000315"/>
    <property type="project" value="UniProtKB"/>
</dbReference>
<dbReference type="GO" id="GO:0045089">
    <property type="term" value="P:positive regulation of innate immune response"/>
    <property type="evidence" value="ECO:0007669"/>
    <property type="project" value="Ensembl"/>
</dbReference>
<dbReference type="GO" id="GO:0032728">
    <property type="term" value="P:positive regulation of interferon-beta production"/>
    <property type="evidence" value="ECO:0007669"/>
    <property type="project" value="Ensembl"/>
</dbReference>
<dbReference type="GO" id="GO:0045654">
    <property type="term" value="P:positive regulation of megakaryocyte differentiation"/>
    <property type="evidence" value="ECO:0000315"/>
    <property type="project" value="UniProtKB"/>
</dbReference>
<dbReference type="GO" id="GO:0045944">
    <property type="term" value="P:positive regulation of transcription by RNA polymerase II"/>
    <property type="evidence" value="ECO:0000314"/>
    <property type="project" value="UniProtKB"/>
</dbReference>
<dbReference type="GO" id="GO:0050767">
    <property type="term" value="P:regulation of neurogenesis"/>
    <property type="evidence" value="ECO:0000250"/>
    <property type="project" value="AgBase"/>
</dbReference>
<dbReference type="GO" id="GO:0072091">
    <property type="term" value="P:regulation of stem cell proliferation"/>
    <property type="evidence" value="ECO:0000250"/>
    <property type="project" value="AgBase"/>
</dbReference>
<dbReference type="GO" id="GO:0006357">
    <property type="term" value="P:regulation of transcription by RNA polymerase II"/>
    <property type="evidence" value="ECO:0000314"/>
    <property type="project" value="UniProtKB"/>
</dbReference>
<dbReference type="GO" id="GO:0032496">
    <property type="term" value="P:response to lipopolysaccharide"/>
    <property type="evidence" value="ECO:0000250"/>
    <property type="project" value="AgBase"/>
</dbReference>
<dbReference type="GO" id="GO:0048545">
    <property type="term" value="P:response to steroid hormone"/>
    <property type="evidence" value="ECO:0007669"/>
    <property type="project" value="Ensembl"/>
</dbReference>
<dbReference type="GO" id="GO:0007289">
    <property type="term" value="P:spermatid nucleus differentiation"/>
    <property type="evidence" value="ECO:0007669"/>
    <property type="project" value="Ensembl"/>
</dbReference>
<dbReference type="GO" id="GO:0033151">
    <property type="term" value="P:V(D)J recombination"/>
    <property type="evidence" value="ECO:0000250"/>
    <property type="project" value="UniProtKB"/>
</dbReference>
<dbReference type="CDD" id="cd21978">
    <property type="entry name" value="HMG-box_HMGB_rpt1"/>
    <property type="match status" value="1"/>
</dbReference>
<dbReference type="CDD" id="cd21979">
    <property type="entry name" value="HMG-box_HMGB_rpt2"/>
    <property type="match status" value="1"/>
</dbReference>
<dbReference type="FunFam" id="1.10.30.10:FF:000006">
    <property type="entry name" value="High mobility group protein B1"/>
    <property type="match status" value="1"/>
</dbReference>
<dbReference type="FunFam" id="1.10.30.10:FF:000018">
    <property type="entry name" value="High mobility group protein B2"/>
    <property type="match status" value="1"/>
</dbReference>
<dbReference type="Gene3D" id="1.10.30.10">
    <property type="entry name" value="High mobility group box domain"/>
    <property type="match status" value="2"/>
</dbReference>
<dbReference type="InterPro" id="IPR009071">
    <property type="entry name" value="HMG_box_dom"/>
</dbReference>
<dbReference type="InterPro" id="IPR036910">
    <property type="entry name" value="HMG_box_dom_sf"/>
</dbReference>
<dbReference type="InterPro" id="IPR017967">
    <property type="entry name" value="HMG_boxA_CS"/>
</dbReference>
<dbReference type="InterPro" id="IPR050342">
    <property type="entry name" value="HMGB"/>
</dbReference>
<dbReference type="PANTHER" id="PTHR48112:SF3">
    <property type="entry name" value="HIGH MOBILITY GROUP PROTEIN B2"/>
    <property type="match status" value="1"/>
</dbReference>
<dbReference type="PANTHER" id="PTHR48112">
    <property type="entry name" value="HIGH MOBILITY GROUP PROTEIN DSP1"/>
    <property type="match status" value="1"/>
</dbReference>
<dbReference type="Pfam" id="PF00505">
    <property type="entry name" value="HMG_box"/>
    <property type="match status" value="1"/>
</dbReference>
<dbReference type="Pfam" id="PF09011">
    <property type="entry name" value="HMG_box_2"/>
    <property type="match status" value="1"/>
</dbReference>
<dbReference type="PRINTS" id="PR00886">
    <property type="entry name" value="HIGHMOBLTY12"/>
</dbReference>
<dbReference type="SMART" id="SM00398">
    <property type="entry name" value="HMG"/>
    <property type="match status" value="2"/>
</dbReference>
<dbReference type="SUPFAM" id="SSF47095">
    <property type="entry name" value="HMG-box"/>
    <property type="match status" value="2"/>
</dbReference>
<dbReference type="PROSITE" id="PS00353">
    <property type="entry name" value="HMG_BOX_1"/>
    <property type="match status" value="1"/>
</dbReference>
<dbReference type="PROSITE" id="PS50118">
    <property type="entry name" value="HMG_BOX_2"/>
    <property type="match status" value="2"/>
</dbReference>
<accession>P26583</accession>
<accession>B2R4K8</accession>
<accession>D3DP37</accession>
<accession>Q5U072</accession>
<reference key="1">
    <citation type="journal article" date="1991" name="Nucleic Acids Res.">
        <title>Sequence of human HMG2 cDNA.</title>
        <authorList>
            <person name="Majumdar A."/>
            <person name="Brown D."/>
            <person name="Kerby S."/>
            <person name="Rudzinski I."/>
            <person name="Polte T."/>
            <person name="Randawa Z."/>
            <person name="Seidman M.M."/>
        </authorList>
    </citation>
    <scope>NUCLEOTIDE SEQUENCE [MRNA]</scope>
</reference>
<reference key="2">
    <citation type="journal article" date="1992" name="J. Biol. Chem.">
        <title>Structure of a gene coding for human HMG2 protein.</title>
        <authorList>
            <person name="Shirakawa H."/>
            <person name="Yoshida M."/>
        </authorList>
    </citation>
    <scope>NUCLEOTIDE SEQUENCE [GENOMIC DNA]</scope>
</reference>
<reference key="3">
    <citation type="submission" date="2004-10" db="EMBL/GenBank/DDBJ databases">
        <title>Cloning of human full-length CDSs in BD Creator(TM) system donor vector.</title>
        <authorList>
            <person name="Kalnine N."/>
            <person name="Chen X."/>
            <person name="Rolfs A."/>
            <person name="Halleck A."/>
            <person name="Hines L."/>
            <person name="Eisenstein S."/>
            <person name="Koundinya M."/>
            <person name="Raphael J."/>
            <person name="Moreira D."/>
            <person name="Kelley T."/>
            <person name="LaBaer J."/>
            <person name="Lin Y."/>
            <person name="Phelan M."/>
            <person name="Farmer A."/>
        </authorList>
    </citation>
    <scope>NUCLEOTIDE SEQUENCE [LARGE SCALE MRNA]</scope>
</reference>
<reference key="4">
    <citation type="journal article" date="2004" name="Nat. Genet.">
        <title>Complete sequencing and characterization of 21,243 full-length human cDNAs.</title>
        <authorList>
            <person name="Ota T."/>
            <person name="Suzuki Y."/>
            <person name="Nishikawa T."/>
            <person name="Otsuki T."/>
            <person name="Sugiyama T."/>
            <person name="Irie R."/>
            <person name="Wakamatsu A."/>
            <person name="Hayashi K."/>
            <person name="Sato H."/>
            <person name="Nagai K."/>
            <person name="Kimura K."/>
            <person name="Makita H."/>
            <person name="Sekine M."/>
            <person name="Obayashi M."/>
            <person name="Nishi T."/>
            <person name="Shibahara T."/>
            <person name="Tanaka T."/>
            <person name="Ishii S."/>
            <person name="Yamamoto J."/>
            <person name="Saito K."/>
            <person name="Kawai Y."/>
            <person name="Isono Y."/>
            <person name="Nakamura Y."/>
            <person name="Nagahari K."/>
            <person name="Murakami K."/>
            <person name="Yasuda T."/>
            <person name="Iwayanagi T."/>
            <person name="Wagatsuma M."/>
            <person name="Shiratori A."/>
            <person name="Sudo H."/>
            <person name="Hosoiri T."/>
            <person name="Kaku Y."/>
            <person name="Kodaira H."/>
            <person name="Kondo H."/>
            <person name="Sugawara M."/>
            <person name="Takahashi M."/>
            <person name="Kanda K."/>
            <person name="Yokoi T."/>
            <person name="Furuya T."/>
            <person name="Kikkawa E."/>
            <person name="Omura Y."/>
            <person name="Abe K."/>
            <person name="Kamihara K."/>
            <person name="Katsuta N."/>
            <person name="Sato K."/>
            <person name="Tanikawa M."/>
            <person name="Yamazaki M."/>
            <person name="Ninomiya K."/>
            <person name="Ishibashi T."/>
            <person name="Yamashita H."/>
            <person name="Murakawa K."/>
            <person name="Fujimori K."/>
            <person name="Tanai H."/>
            <person name="Kimata M."/>
            <person name="Watanabe M."/>
            <person name="Hiraoka S."/>
            <person name="Chiba Y."/>
            <person name="Ishida S."/>
            <person name="Ono Y."/>
            <person name="Takiguchi S."/>
            <person name="Watanabe S."/>
            <person name="Yosida M."/>
            <person name="Hotuta T."/>
            <person name="Kusano J."/>
            <person name="Kanehori K."/>
            <person name="Takahashi-Fujii A."/>
            <person name="Hara H."/>
            <person name="Tanase T.-O."/>
            <person name="Nomura Y."/>
            <person name="Togiya S."/>
            <person name="Komai F."/>
            <person name="Hara R."/>
            <person name="Takeuchi K."/>
            <person name="Arita M."/>
            <person name="Imose N."/>
            <person name="Musashino K."/>
            <person name="Yuuki H."/>
            <person name="Oshima A."/>
            <person name="Sasaki N."/>
            <person name="Aotsuka S."/>
            <person name="Yoshikawa Y."/>
            <person name="Matsunawa H."/>
            <person name="Ichihara T."/>
            <person name="Shiohata N."/>
            <person name="Sano S."/>
            <person name="Moriya S."/>
            <person name="Momiyama H."/>
            <person name="Satoh N."/>
            <person name="Takami S."/>
            <person name="Terashima Y."/>
            <person name="Suzuki O."/>
            <person name="Nakagawa S."/>
            <person name="Senoh A."/>
            <person name="Mizoguchi H."/>
            <person name="Goto Y."/>
            <person name="Shimizu F."/>
            <person name="Wakebe H."/>
            <person name="Hishigaki H."/>
            <person name="Watanabe T."/>
            <person name="Sugiyama A."/>
            <person name="Takemoto M."/>
            <person name="Kawakami B."/>
            <person name="Yamazaki M."/>
            <person name="Watanabe K."/>
            <person name="Kumagai A."/>
            <person name="Itakura S."/>
            <person name="Fukuzumi Y."/>
            <person name="Fujimori Y."/>
            <person name="Komiyama M."/>
            <person name="Tashiro H."/>
            <person name="Tanigami A."/>
            <person name="Fujiwara T."/>
            <person name="Ono T."/>
            <person name="Yamada K."/>
            <person name="Fujii Y."/>
            <person name="Ozaki K."/>
            <person name="Hirao M."/>
            <person name="Ohmori Y."/>
            <person name="Kawabata A."/>
            <person name="Hikiji T."/>
            <person name="Kobatake N."/>
            <person name="Inagaki H."/>
            <person name="Ikema Y."/>
            <person name="Okamoto S."/>
            <person name="Okitani R."/>
            <person name="Kawakami T."/>
            <person name="Noguchi S."/>
            <person name="Itoh T."/>
            <person name="Shigeta K."/>
            <person name="Senba T."/>
            <person name="Matsumura K."/>
            <person name="Nakajima Y."/>
            <person name="Mizuno T."/>
            <person name="Morinaga M."/>
            <person name="Sasaki M."/>
            <person name="Togashi T."/>
            <person name="Oyama M."/>
            <person name="Hata H."/>
            <person name="Watanabe M."/>
            <person name="Komatsu T."/>
            <person name="Mizushima-Sugano J."/>
            <person name="Satoh T."/>
            <person name="Shirai Y."/>
            <person name="Takahashi Y."/>
            <person name="Nakagawa K."/>
            <person name="Okumura K."/>
            <person name="Nagase T."/>
            <person name="Nomura N."/>
            <person name="Kikuchi H."/>
            <person name="Masuho Y."/>
            <person name="Yamashita R."/>
            <person name="Nakai K."/>
            <person name="Yada T."/>
            <person name="Nakamura Y."/>
            <person name="Ohara O."/>
            <person name="Isogai T."/>
            <person name="Sugano S."/>
        </authorList>
    </citation>
    <scope>NUCLEOTIDE SEQUENCE [LARGE SCALE MRNA]</scope>
    <source>
        <tissue>Brain</tissue>
    </source>
</reference>
<reference key="5">
    <citation type="submission" date="2005-09" db="EMBL/GenBank/DDBJ databases">
        <authorList>
            <person name="Mural R.J."/>
            <person name="Istrail S."/>
            <person name="Sutton G.G."/>
            <person name="Florea L."/>
            <person name="Halpern A.L."/>
            <person name="Mobarry C.M."/>
            <person name="Lippert R."/>
            <person name="Walenz B."/>
            <person name="Shatkay H."/>
            <person name="Dew I."/>
            <person name="Miller J.R."/>
            <person name="Flanigan M.J."/>
            <person name="Edwards N.J."/>
            <person name="Bolanos R."/>
            <person name="Fasulo D."/>
            <person name="Halldorsson B.V."/>
            <person name="Hannenhalli S."/>
            <person name="Turner R."/>
            <person name="Yooseph S."/>
            <person name="Lu F."/>
            <person name="Nusskern D.R."/>
            <person name="Shue B.C."/>
            <person name="Zheng X.H."/>
            <person name="Zhong F."/>
            <person name="Delcher A.L."/>
            <person name="Huson D.H."/>
            <person name="Kravitz S.A."/>
            <person name="Mouchard L."/>
            <person name="Reinert K."/>
            <person name="Remington K.A."/>
            <person name="Clark A.G."/>
            <person name="Waterman M.S."/>
            <person name="Eichler E.E."/>
            <person name="Adams M.D."/>
            <person name="Hunkapiller M.W."/>
            <person name="Myers E.W."/>
            <person name="Venter J.C."/>
        </authorList>
    </citation>
    <scope>NUCLEOTIDE SEQUENCE [LARGE SCALE GENOMIC DNA]</scope>
</reference>
<reference key="6">
    <citation type="journal article" date="2004" name="Genome Res.">
        <title>The status, quality, and expansion of the NIH full-length cDNA project: the Mammalian Gene Collection (MGC).</title>
        <authorList>
            <consortium name="The MGC Project Team"/>
        </authorList>
    </citation>
    <scope>NUCLEOTIDE SEQUENCE [LARGE SCALE MRNA]</scope>
    <source>
        <tissue>Placenta</tissue>
        <tissue>Skin</tissue>
    </source>
</reference>
<reference key="7">
    <citation type="journal article" date="1992" name="Nucleic Acids Res.">
        <title>A human HMG2 cDNA with a novel 3'-untranslated region.</title>
        <authorList>
            <person name="Alexandre S."/>
            <person name="Li W.W."/>
            <person name="Lee A.S."/>
        </authorList>
    </citation>
    <scope>NUCLEOTIDE SEQUENCE [MRNA] OF 24-209</scope>
</reference>
<reference key="8">
    <citation type="journal article" date="1995" name="Genes Dev.">
        <title>Activation of the TFIID-TFIIA complex with HMG-2.</title>
        <authorList>
            <person name="Shykind B.M."/>
            <person name="Kim J."/>
            <person name="Sharp P.A."/>
        </authorList>
    </citation>
    <scope>FUNCTION</scope>
</reference>
<reference key="9">
    <citation type="journal article" date="2002" name="Mol. Cell. Biol.">
        <title>HMG2 interacts with the nucleosome assembly protein SET and is a target of the cytotoxic T-lymphocyte protease granzyme A.</title>
        <authorList>
            <person name="Fan Z."/>
            <person name="Beresford P.J."/>
            <person name="Zhang D."/>
            <person name="Lieberman J."/>
        </authorList>
    </citation>
    <scope>FUNCTION</scope>
    <scope>SUBCELLULAR LOCATION</scope>
    <scope>IDENTIFICATION IN THE SET COMPLEX</scope>
    <scope>INTERACTION WITH SET</scope>
</reference>
<reference key="10">
    <citation type="journal article" date="2003" name="Mol. Biol. Cell">
        <title>Association of chromatin proteins high mobility group box (HMGB) 1 and HMGB2 with mitotic chromosomes.</title>
        <authorList>
            <person name="Pallier C."/>
            <person name="Scaffidi P."/>
            <person name="Chopineau-Proust S."/>
            <person name="Agresti A."/>
            <person name="Nordmann P."/>
            <person name="Bianchi M.E."/>
            <person name="Marechal V."/>
        </authorList>
    </citation>
    <scope>SUBCELLULAR LOCATION</scope>
</reference>
<reference key="11">
    <citation type="journal article" date="2008" name="Biochem. Biophys. Res. Commun.">
        <title>Transient HMGB protein interactions with B-DNA duplexes and complexes.</title>
        <authorList>
            <person name="Zimmerman J."/>
            <person name="Maher L.J. III"/>
        </authorList>
    </citation>
    <scope>FUNCTION</scope>
</reference>
<reference key="12">
    <citation type="journal article" date="2009" name="Autoimmunity">
        <title>High mobility group B2 is secreted by myeloid cells and has mitogenic and chemoattractant activities similar to high mobility group B1.</title>
        <authorList>
            <person name="Pusterla T."/>
            <person name="de Marchis F."/>
            <person name="Palumbo R."/>
            <person name="Bianchi M.E."/>
        </authorList>
    </citation>
    <scope>FUNCTION</scope>
    <scope>SUBCELLULAR LOCATION</scope>
</reference>
<reference key="13">
    <citation type="journal article" date="2009" name="Biochemistry">
        <title>Nucleosome binding properties and Co-remodeling activities of native and in vivo acetylated HMGB-1 and HMGB-2 proteins.</title>
        <authorList>
            <person name="Ugrinova I."/>
            <person name="Pashev I.G."/>
            <person name="Pasheva E.A."/>
        </authorList>
    </citation>
    <scope>FUNCTION</scope>
    <scope>ACETYLATION</scope>
</reference>
<reference key="14">
    <citation type="journal article" date="2009" name="Science">
        <title>Lysine acetylation targets protein complexes and co-regulates major cellular functions.</title>
        <authorList>
            <person name="Choudhary C."/>
            <person name="Kumar C."/>
            <person name="Gnad F."/>
            <person name="Nielsen M.L."/>
            <person name="Rehman M."/>
            <person name="Walther T.C."/>
            <person name="Olsen J.V."/>
            <person name="Mann M."/>
        </authorList>
    </citation>
    <scope>ACETYLATION [LARGE SCALE ANALYSIS] AT LYS-30</scope>
    <scope>IDENTIFICATION BY MASS SPECTROMETRY [LARGE SCALE ANALYSIS]</scope>
</reference>
<reference key="15">
    <citation type="journal article" date="2010" name="Blood">
        <title>High-mobility group protein HMGB2 regulates human erythroid differentiation through trans-activation of GFI1B transcription.</title>
        <authorList>
            <person name="Laurent B."/>
            <person name="Randrianarison-Huetz V."/>
            <person name="Marechal V."/>
            <person name="Marchal V."/>
            <person name="Mayeux P."/>
            <person name="Dusanter-Fourt I."/>
            <person name="Dumenil D."/>
        </authorList>
    </citation>
    <scope>FUNCTION</scope>
</reference>
<reference key="16">
    <citation type="journal article" date="2010" name="Biochim. Biophys. Acta">
        <title>HMGB proteins: interactions with DNA and chromatin.</title>
        <authorList>
            <person name="Stros M."/>
        </authorList>
    </citation>
    <scope>REVIEW ON FUNCTION RELATED TO DNA-BINDING</scope>
</reference>
<reference key="17">
    <citation type="journal article" date="2011" name="BMC Syst. Biol.">
        <title>Initial characterization of the human central proteome.</title>
        <authorList>
            <person name="Burkard T.R."/>
            <person name="Planyavsky M."/>
            <person name="Kaupe I."/>
            <person name="Breitwieser F.P."/>
            <person name="Buerckstuemmer T."/>
            <person name="Bennett K.L."/>
            <person name="Superti-Furga G."/>
            <person name="Colinge J."/>
        </authorList>
    </citation>
    <scope>IDENTIFICATION BY MASS SPECTROMETRY [LARGE SCALE ANALYSIS]</scope>
</reference>
<reference key="18">
    <citation type="journal article" date="2012" name="Proc. Natl. Acad. Sci. U.S.A.">
        <title>N-terminal acetylome analyses and functional insights of the N-terminal acetyltransferase NatB.</title>
        <authorList>
            <person name="Van Damme P."/>
            <person name="Lasa M."/>
            <person name="Polevoda B."/>
            <person name="Gazquez C."/>
            <person name="Elosegui-Artola A."/>
            <person name="Kim D.S."/>
            <person name="De Juan-Pardo E."/>
            <person name="Demeyer K."/>
            <person name="Hole K."/>
            <person name="Larrea E."/>
            <person name="Timmerman E."/>
            <person name="Prieto J."/>
            <person name="Arnesen T."/>
            <person name="Sherman F."/>
            <person name="Gevaert K."/>
            <person name="Aldabe R."/>
        </authorList>
    </citation>
    <scope>IDENTIFICATION BY MASS SPECTROMETRY [LARGE SCALE ANALYSIS]</scope>
</reference>
<reference key="19">
    <citation type="journal article" date="2013" name="Antimicrob. Agents Chemother.">
        <title>Antimicrobial activity of high-mobility-group box 2: a new function to a well-known protein.</title>
        <authorList>
            <person name="Kuechler R."/>
            <person name="Schroeder B.O."/>
            <person name="Jaeger S.U."/>
            <person name="Stange E.F."/>
            <person name="Wehkamp J."/>
        </authorList>
    </citation>
    <scope>FUNCTION</scope>
    <scope>SUBCELLULAR LOCATION</scope>
    <scope>TISSUE SPECIFICITY</scope>
</reference>
<reference key="20">
    <citation type="journal article" date="2013" name="J. Proteome Res.">
        <title>Toward a comprehensive characterization of a human cancer cell phosphoproteome.</title>
        <authorList>
            <person name="Zhou H."/>
            <person name="Di Palma S."/>
            <person name="Preisinger C."/>
            <person name="Peng M."/>
            <person name="Polat A.N."/>
            <person name="Heck A.J."/>
            <person name="Mohammed S."/>
        </authorList>
    </citation>
    <scope>PHOSPHORYLATION [LARGE SCALE ANALYSIS] AT SER-35</scope>
    <scope>IDENTIFICATION BY MASS SPECTROMETRY [LARGE SCALE ANALYSIS]</scope>
    <source>
        <tissue>Cervix carcinoma</tissue>
        <tissue>Erythroleukemia</tissue>
    </source>
</reference>
<reference key="21">
    <citation type="journal article" date="2014" name="J. Proteomics">
        <title>An enzyme assisted RP-RPLC approach for in-depth analysis of human liver phosphoproteome.</title>
        <authorList>
            <person name="Bian Y."/>
            <person name="Song C."/>
            <person name="Cheng K."/>
            <person name="Dong M."/>
            <person name="Wang F."/>
            <person name="Huang J."/>
            <person name="Sun D."/>
            <person name="Wang L."/>
            <person name="Ye M."/>
            <person name="Zou H."/>
        </authorList>
    </citation>
    <scope>IDENTIFICATION BY MASS SPECTROMETRY [LARGE SCALE ANALYSIS]</scope>
    <source>
        <tissue>Liver</tissue>
    </source>
</reference>
<reference key="22">
    <citation type="journal article" date="2014" name="Mol. Med.">
        <title>A systematic nomenclature for the redox states of high mobility group box (HMGB) proteins.</title>
        <authorList>
            <person name="Antoine D.J."/>
            <person name="Harris H.E."/>
            <person name="Andersson U."/>
            <person name="Tracey K.J."/>
            <person name="Bianchi M.E."/>
        </authorList>
    </citation>
    <scope>NOMENCLATURE OF REDOX FORMS</scope>
</reference>
<reference key="23">
    <citation type="journal article" date="2015" name="Proteomics">
        <title>N-terminome analysis of the human mitochondrial proteome.</title>
        <authorList>
            <person name="Vaca Jacome A.S."/>
            <person name="Rabilloud T."/>
            <person name="Schaeffer-Reiss C."/>
            <person name="Rompais M."/>
            <person name="Ayoub D."/>
            <person name="Lane L."/>
            <person name="Bairoch A."/>
            <person name="Van Dorsselaer A."/>
            <person name="Carapito C."/>
        </authorList>
    </citation>
    <scope>IDENTIFICATION BY MASS SPECTROMETRY [LARGE SCALE ANALYSIS]</scope>
</reference>
<protein>
    <recommendedName>
        <fullName>High mobility group protein B2</fullName>
    </recommendedName>
    <alternativeName>
        <fullName>High mobility group protein 2</fullName>
        <shortName>HMG-2</shortName>
    </alternativeName>
</protein>
<proteinExistence type="evidence at protein level"/>